<proteinExistence type="evidence at protein level"/>
<dbReference type="EC" id="1.18.1.2"/>
<dbReference type="EMBL" id="X94297">
    <property type="protein sequence ID" value="CAA63961.1"/>
    <property type="molecule type" value="Genomic_DNA"/>
</dbReference>
<dbReference type="EMBL" id="BA000022">
    <property type="protein sequence ID" value="BAA18459.1"/>
    <property type="molecule type" value="Genomic_DNA"/>
</dbReference>
<dbReference type="PIR" id="S76200">
    <property type="entry name" value="S76200"/>
</dbReference>
<dbReference type="PDB" id="8HFQ">
    <property type="method" value="EM"/>
    <property type="resolution" value="2.64 A"/>
    <property type="chains" value="m=1-413"/>
</dbReference>
<dbReference type="PDBsum" id="8HFQ"/>
<dbReference type="EMDB" id="EMD-34724"/>
<dbReference type="SMR" id="Q55318"/>
<dbReference type="IntAct" id="Q55318">
    <property type="interactions" value="1"/>
</dbReference>
<dbReference type="MINT" id="Q55318"/>
<dbReference type="STRING" id="1148.gene:10499336"/>
<dbReference type="iPTMnet" id="Q55318"/>
<dbReference type="PaxDb" id="1148-1653546"/>
<dbReference type="EnsemblBacteria" id="BAA18459">
    <property type="protein sequence ID" value="BAA18459"/>
    <property type="gene ID" value="BAA18459"/>
</dbReference>
<dbReference type="KEGG" id="syn:slr1643"/>
<dbReference type="eggNOG" id="COG0369">
    <property type="taxonomic scope" value="Bacteria"/>
</dbReference>
<dbReference type="InParanoid" id="Q55318"/>
<dbReference type="PhylomeDB" id="Q55318"/>
<dbReference type="BioCyc" id="MetaCyc:MONOMER-21694"/>
<dbReference type="BRENDA" id="1.18.1.2">
    <property type="organism ID" value="382"/>
</dbReference>
<dbReference type="Proteomes" id="UP000001425">
    <property type="component" value="Chromosome"/>
</dbReference>
<dbReference type="GO" id="GO:0030089">
    <property type="term" value="C:phycobilisome"/>
    <property type="evidence" value="ECO:0007669"/>
    <property type="project" value="UniProtKB-KW"/>
</dbReference>
<dbReference type="GO" id="GO:0031676">
    <property type="term" value="C:plasma membrane-derived thylakoid membrane"/>
    <property type="evidence" value="ECO:0007669"/>
    <property type="project" value="UniProtKB-SubCell"/>
</dbReference>
<dbReference type="GO" id="GO:0004324">
    <property type="term" value="F:ferredoxin-NADP+ reductase activity"/>
    <property type="evidence" value="ECO:0007669"/>
    <property type="project" value="UniProtKB-EC"/>
</dbReference>
<dbReference type="CDD" id="cd06208">
    <property type="entry name" value="CYPOR_like_FNR"/>
    <property type="match status" value="1"/>
</dbReference>
<dbReference type="FunFam" id="3.40.50.80:FF:000008">
    <property type="entry name" value="Ferredoxin--NADP reductase, chloroplastic"/>
    <property type="match status" value="1"/>
</dbReference>
<dbReference type="Gene3D" id="3.40.50.80">
    <property type="entry name" value="Nucleotide-binding domain of ferredoxin-NADP reductase (FNR) module"/>
    <property type="match status" value="1"/>
</dbReference>
<dbReference type="Gene3D" id="2.40.30.10">
    <property type="entry name" value="Translation factors"/>
    <property type="match status" value="1"/>
</dbReference>
<dbReference type="InterPro" id="IPR008213">
    <property type="entry name" value="CpcD-like_dom"/>
</dbReference>
<dbReference type="InterPro" id="IPR017927">
    <property type="entry name" value="FAD-bd_FR_type"/>
</dbReference>
<dbReference type="InterPro" id="IPR001709">
    <property type="entry name" value="Flavoprot_Pyr_Nucl_cyt_Rdtase"/>
</dbReference>
<dbReference type="InterPro" id="IPR015701">
    <property type="entry name" value="FNR"/>
</dbReference>
<dbReference type="InterPro" id="IPR039261">
    <property type="entry name" value="FNR_nucleotide-bd"/>
</dbReference>
<dbReference type="InterPro" id="IPR035442">
    <property type="entry name" value="FNR_plant_Cyanobacteria"/>
</dbReference>
<dbReference type="InterPro" id="IPR001433">
    <property type="entry name" value="OxRdtase_FAD/NAD-bd"/>
</dbReference>
<dbReference type="InterPro" id="IPR017938">
    <property type="entry name" value="Riboflavin_synthase-like_b-brl"/>
</dbReference>
<dbReference type="NCBIfam" id="NF045929">
    <property type="entry name" value="FNRPetHCyano"/>
    <property type="match status" value="1"/>
</dbReference>
<dbReference type="PANTHER" id="PTHR43314">
    <property type="match status" value="1"/>
</dbReference>
<dbReference type="Pfam" id="PF01383">
    <property type="entry name" value="CpcD"/>
    <property type="match status" value="1"/>
</dbReference>
<dbReference type="Pfam" id="PF00175">
    <property type="entry name" value="NAD_binding_1"/>
    <property type="match status" value="1"/>
</dbReference>
<dbReference type="PIRSF" id="PIRSF501178">
    <property type="entry name" value="FNR-PetH"/>
    <property type="match status" value="1"/>
</dbReference>
<dbReference type="PIRSF" id="PIRSF000361">
    <property type="entry name" value="Frd-NADP+_RD"/>
    <property type="match status" value="1"/>
</dbReference>
<dbReference type="PRINTS" id="PR00371">
    <property type="entry name" value="FPNCR"/>
</dbReference>
<dbReference type="SMART" id="SM01094">
    <property type="entry name" value="CpcD"/>
    <property type="match status" value="1"/>
</dbReference>
<dbReference type="SUPFAM" id="SSF52343">
    <property type="entry name" value="Ferredoxin reductase-like, C-terminal NADP-linked domain"/>
    <property type="match status" value="1"/>
</dbReference>
<dbReference type="SUPFAM" id="SSF63380">
    <property type="entry name" value="Riboflavin synthase domain-like"/>
    <property type="match status" value="1"/>
</dbReference>
<dbReference type="PROSITE" id="PS51441">
    <property type="entry name" value="CPCD_LIKE"/>
    <property type="match status" value="1"/>
</dbReference>
<dbReference type="PROSITE" id="PS51384">
    <property type="entry name" value="FAD_FR"/>
    <property type="match status" value="1"/>
</dbReference>
<accession>Q55318</accession>
<accession>P74364</accession>
<name>FENR_SYNY3</name>
<reference key="1">
    <citation type="journal article" date="1998" name="Plant Mol. Biol.">
        <title>Characterization and transcriptional regulation of the Synechocystis PCC 6803 petH gene, encoding ferredoxin-NADP+ oxidoreductase: involvement of a novel type of divergent operator.</title>
        <authorList>
            <person name="van Thor J.J."/>
            <person name="Hellingwerf K.J."/>
            <person name="Matthijs H.C.P."/>
        </authorList>
    </citation>
    <scope>NUCLEOTIDE SEQUENCE [GENOMIC DNA]</scope>
    <scope>PROBABLE COFACTOR</scope>
    <scope>BIOPHYSICOCHEMICAL PROPERTIES</scope>
    <scope>INDUCTION</scope>
    <scope>DISRUPTION PHENOTYPE</scope>
    <source>
        <strain>ATCC 27184 / PCC 6803 / Kazusa</strain>
    </source>
</reference>
<reference key="2">
    <citation type="journal article" date="1996" name="DNA Res.">
        <title>Sequence analysis of the genome of the unicellular cyanobacterium Synechocystis sp. strain PCC6803. II. Sequence determination of the entire genome and assignment of potential protein-coding regions.</title>
        <authorList>
            <person name="Kaneko T."/>
            <person name="Sato S."/>
            <person name="Kotani H."/>
            <person name="Tanaka A."/>
            <person name="Asamizu E."/>
            <person name="Nakamura Y."/>
            <person name="Miyajima N."/>
            <person name="Hirosawa M."/>
            <person name="Sugiura M."/>
            <person name="Sasamoto S."/>
            <person name="Kimura T."/>
            <person name="Hosouchi T."/>
            <person name="Matsuno A."/>
            <person name="Muraki A."/>
            <person name="Nakazaki N."/>
            <person name="Naruo K."/>
            <person name="Okumura S."/>
            <person name="Shimpo S."/>
            <person name="Takeuchi C."/>
            <person name="Wada T."/>
            <person name="Watanabe A."/>
            <person name="Yamada M."/>
            <person name="Yasuda M."/>
            <person name="Tabata S."/>
        </authorList>
    </citation>
    <scope>NUCLEOTIDE SEQUENCE [LARGE SCALE GENOMIC DNA]</scope>
    <source>
        <strain>ATCC 27184 / PCC 6803 / Kazusa</strain>
    </source>
</reference>
<reference key="3">
    <citation type="journal article" date="2019" name="MBio">
        <title>Phycobilisomes Harbor FNRL in Cyanobacteria.</title>
        <authorList>
            <person name="Liu H."/>
            <person name="Weisz D.A."/>
            <person name="Zhang M.M."/>
            <person name="Cheng M."/>
            <person name="Zhang B."/>
            <person name="Zhang H."/>
            <person name="Gerstenecker G.S."/>
            <person name="Pakrasi H.B."/>
            <person name="Gross M.L."/>
            <person name="Blankenship R.E."/>
        </authorList>
    </citation>
    <scope>PROTEIN SEQUENCE OF 1-12 AND 66-74</scope>
    <scope>SUBUNIT</scope>
    <scope>ACETYLATION AT MET-1</scope>
    <source>
        <strain>ATCC 27184 / PCC 6803 / Kazusa</strain>
    </source>
</reference>
<feature type="chain" id="PRO_0000167638" description="Ferredoxin--NADP reductase">
    <location>
        <begin position="1"/>
        <end position="413"/>
    </location>
</feature>
<feature type="domain" description="CpcD-like" evidence="3">
    <location>
        <begin position="18"/>
        <end position="76"/>
    </location>
</feature>
<feature type="domain" description="FAD-binding FR-type" evidence="2">
    <location>
        <begin position="133"/>
        <end position="256"/>
    </location>
</feature>
<feature type="region of interest" description="Disordered" evidence="4">
    <location>
        <begin position="74"/>
        <end position="120"/>
    </location>
</feature>
<feature type="compositionally biased region" description="Polar residues" evidence="4">
    <location>
        <begin position="107"/>
        <end position="116"/>
    </location>
</feature>
<feature type="binding site" evidence="1">
    <location>
        <begin position="192"/>
        <end position="195"/>
    </location>
    <ligand>
        <name>FAD</name>
        <dbReference type="ChEBI" id="CHEBI:57692"/>
    </ligand>
</feature>
<feature type="binding site" evidence="1">
    <location>
        <position position="195"/>
    </location>
    <ligand>
        <name>NADP(+)</name>
        <dbReference type="ChEBI" id="CHEBI:58349"/>
    </ligand>
</feature>
<feature type="binding site" evidence="1">
    <location>
        <begin position="213"/>
        <end position="215"/>
    </location>
    <ligand>
        <name>FAD</name>
        <dbReference type="ChEBI" id="CHEBI:57692"/>
    </ligand>
</feature>
<feature type="binding site" evidence="1">
    <location>
        <position position="215"/>
    </location>
    <ligand>
        <name>NADP(+)</name>
        <dbReference type="ChEBI" id="CHEBI:58349"/>
    </ligand>
</feature>
<feature type="binding site" evidence="1">
    <location>
        <position position="219"/>
    </location>
    <ligand>
        <name>FAD</name>
        <dbReference type="ChEBI" id="CHEBI:57692"/>
    </ligand>
</feature>
<feature type="binding site" evidence="1">
    <location>
        <begin position="230"/>
        <end position="232"/>
    </location>
    <ligand>
        <name>FAD</name>
        <dbReference type="ChEBI" id="CHEBI:57692"/>
    </ligand>
</feature>
<feature type="binding site" evidence="1">
    <location>
        <position position="271"/>
    </location>
    <ligand>
        <name>FAD</name>
        <dbReference type="ChEBI" id="CHEBI:57692"/>
    </ligand>
</feature>
<feature type="binding site" evidence="1">
    <location>
        <position position="271"/>
    </location>
    <ligand>
        <name>NADP(+)</name>
        <dbReference type="ChEBI" id="CHEBI:58349"/>
    </ligand>
</feature>
<feature type="binding site" evidence="1">
    <location>
        <begin position="303"/>
        <end position="304"/>
    </location>
    <ligand>
        <name>NADP(+)</name>
        <dbReference type="ChEBI" id="CHEBI:58349"/>
    </ligand>
</feature>
<feature type="binding site" evidence="1">
    <location>
        <begin position="333"/>
        <end position="334"/>
    </location>
    <ligand>
        <name>NADP(+)</name>
        <dbReference type="ChEBI" id="CHEBI:58349"/>
    </ligand>
</feature>
<feature type="binding site" evidence="1">
    <location>
        <begin position="343"/>
        <end position="347"/>
    </location>
    <ligand>
        <name>NADP(+)</name>
        <dbReference type="ChEBI" id="CHEBI:58349"/>
    </ligand>
</feature>
<feature type="binding site" evidence="1">
    <location>
        <begin position="372"/>
        <end position="373"/>
    </location>
    <ligand>
        <name>NADP(+)</name>
        <dbReference type="ChEBI" id="CHEBI:58349"/>
    </ligand>
</feature>
<feature type="binding site" evidence="1">
    <location>
        <position position="411"/>
    </location>
    <ligand>
        <name>NADP(+)</name>
        <dbReference type="ChEBI" id="CHEBI:58349"/>
    </ligand>
</feature>
<feature type="modified residue" description="N-acetylmethionine" evidence="9">
    <location>
        <position position="1"/>
    </location>
</feature>
<feature type="sequence conflict" description="In Ref. 1; CAA63961." evidence="8" ref="1">
    <original>E</original>
    <variation>K</variation>
    <location>
        <position position="182"/>
    </location>
</feature>
<feature type="sequence conflict" description="In Ref. 1; CAA63961." evidence="8" ref="1">
    <original>D</original>
    <variation>S</variation>
    <location>
        <position position="243"/>
    </location>
</feature>
<feature type="sequence conflict" description="In Ref. 1; CAA63961." evidence="8" ref="1">
    <original>QHRV</original>
    <variation>STGL</variation>
    <location>
        <begin position="347"/>
        <end position="350"/>
    </location>
</feature>
<evidence type="ECO:0000250" key="1"/>
<evidence type="ECO:0000255" key="2">
    <source>
        <dbReference type="PROSITE-ProRule" id="PRU00716"/>
    </source>
</evidence>
<evidence type="ECO:0000255" key="3">
    <source>
        <dbReference type="PROSITE-ProRule" id="PRU00771"/>
    </source>
</evidence>
<evidence type="ECO:0000256" key="4">
    <source>
        <dbReference type="SAM" id="MobiDB-lite"/>
    </source>
</evidence>
<evidence type="ECO:0000269" key="5">
    <source>
    </source>
</evidence>
<evidence type="ECO:0000269" key="6">
    <source>
    </source>
</evidence>
<evidence type="ECO:0000303" key="7">
    <source>
    </source>
</evidence>
<evidence type="ECO:0000305" key="8"/>
<evidence type="ECO:0000305" key="9">
    <source>
    </source>
</evidence>
<evidence type="ECO:0000305" key="10">
    <source>
    </source>
</evidence>
<comment type="catalytic activity">
    <reaction>
        <text>2 reduced [2Fe-2S]-[ferredoxin] + NADP(+) + H(+) = 2 oxidized [2Fe-2S]-[ferredoxin] + NADPH</text>
        <dbReference type="Rhea" id="RHEA:20125"/>
        <dbReference type="Rhea" id="RHEA-COMP:10000"/>
        <dbReference type="Rhea" id="RHEA-COMP:10001"/>
        <dbReference type="ChEBI" id="CHEBI:15378"/>
        <dbReference type="ChEBI" id="CHEBI:33737"/>
        <dbReference type="ChEBI" id="CHEBI:33738"/>
        <dbReference type="ChEBI" id="CHEBI:57783"/>
        <dbReference type="ChEBI" id="CHEBI:58349"/>
        <dbReference type="EC" id="1.18.1.2"/>
    </reaction>
</comment>
<comment type="cofactor">
    <cofactor evidence="10">
        <name>FAD</name>
        <dbReference type="ChEBI" id="CHEBI:57692"/>
    </cofactor>
</comment>
<comment type="biophysicochemical properties">
    <kinetics>
        <KM evidence="6">21 uM for NADPH (at 25 degrees Celsius)</KM>
        <Vmax evidence="6">110.0 umol/min/mg enzyme toward NADPH (at 25 degrees Celsius)</Vmax>
        <text evidence="6">The enzyme was overproduced in E.coli.</text>
    </kinetics>
</comment>
<comment type="subunit">
    <text evidence="5">Purifies with both the classic phycobilisome (PBS) supercomplex (CpcG-PBS) and a photosystem I-associated PBS called CpcL-PBS; it accumulates to a higher level in CpcL-PBS. In both PBS it can be cross-linked to both phycocyanin subunits.</text>
</comment>
<comment type="subcellular location">
    <subcellularLocation>
        <location>Cellular thylakoid membrane</location>
        <topology>Peripheral membrane protein</topology>
        <orientation>Cytoplasmic side</orientation>
    </subcellularLocation>
    <text>May be bound to the thylakoid membrane or anchored to the thylakoid-bound phycobilisomes.</text>
</comment>
<comment type="induction">
    <text evidence="6">By light, and also by 0.55 M NaCl.</text>
</comment>
<comment type="PTM">
    <text evidence="5">Acetylated at the N-terminus; 6% of protein in CpcG-PBS and 12% of protein in CpcL-PBS is acetylated.</text>
</comment>
<comment type="disruption phenotype">
    <text evidence="6">Essential for growth.</text>
</comment>
<comment type="similarity">
    <text evidence="8">Belongs to the ferredoxin--NADP reductase type 1 family.</text>
</comment>
<gene>
    <name evidence="7" type="primary">petH</name>
    <name type="ordered locus">slr1643</name>
</gene>
<keyword id="KW-0002">3D-structure</keyword>
<keyword id="KW-0007">Acetylation</keyword>
<keyword id="KW-0042">Antenna complex</keyword>
<keyword id="KW-0903">Direct protein sequencing</keyword>
<keyword id="KW-0274">FAD</keyword>
<keyword id="KW-0285">Flavoprotein</keyword>
<keyword id="KW-0472">Membrane</keyword>
<keyword id="KW-0521">NADP</keyword>
<keyword id="KW-0560">Oxidoreductase</keyword>
<keyword id="KW-0605">Phycobilisome</keyword>
<keyword id="KW-1185">Reference proteome</keyword>
<keyword id="KW-0793">Thylakoid</keyword>
<organism>
    <name type="scientific">Synechocystis sp. (strain ATCC 27184 / PCC 6803 / Kazusa)</name>
    <dbReference type="NCBI Taxonomy" id="1111708"/>
    <lineage>
        <taxon>Bacteria</taxon>
        <taxon>Bacillati</taxon>
        <taxon>Cyanobacteriota</taxon>
        <taxon>Cyanophyceae</taxon>
        <taxon>Synechococcales</taxon>
        <taxon>Merismopediaceae</taxon>
        <taxon>Synechocystis</taxon>
    </lineage>
</organism>
<protein>
    <recommendedName>
        <fullName>Ferredoxin--NADP reductase</fullName>
        <shortName>FNR</shortName>
        <ecNumber>1.18.1.2</ecNumber>
    </recommendedName>
</protein>
<sequence>MYSPGYVATSSRQSDAGNRLFVYEVIGLSQSTMTDGLDYPIRRSGSTFITVPLKRMNQEMRRITRMGGKIVSIKPLEGDSPLPHTEGIAKPSQSEGSGSEAVANPAPESNKTMTTTPKEKKADDIPVNIYRPKTPYIGKVLENYPLVREGAIGTVQHLTFDLSAGDLRYLEGQSIGIIPPGEDDKGKPHKLRLYSIASTRHGDFGDDKTVSLCVRQLEYQNEAGETVQGVCSTYLCNIKEGDDIAITGPVGKEMLLPPDEDANIVMLATGTGIAPFRAFLWRMFKEQHEDYKFKGLAWLIFGIPKSENILYKDDLEKMAAEFPDNFRLTYAISREQQNAEGGRMYIQHRVAENAEELWNLMQNPKTHTYMCGLKGMEPGIDEAFTALAEQNGKEWTTFQREMKKEHRWHVETY</sequence>